<name>RL7_BLOPB</name>
<gene>
    <name evidence="1" type="primary">rplL</name>
    <name type="ordered locus">BPEN_578</name>
</gene>
<organism>
    <name type="scientific">Blochmanniella pennsylvanica (strain BPEN)</name>
    <dbReference type="NCBI Taxonomy" id="291272"/>
    <lineage>
        <taxon>Bacteria</taxon>
        <taxon>Pseudomonadati</taxon>
        <taxon>Pseudomonadota</taxon>
        <taxon>Gammaproteobacteria</taxon>
        <taxon>Enterobacterales</taxon>
        <taxon>Enterobacteriaceae</taxon>
        <taxon>ant endosymbionts</taxon>
        <taxon>Candidatus Blochmanniella</taxon>
    </lineage>
</organism>
<accession>Q492B8</accession>
<reference key="1">
    <citation type="journal article" date="2005" name="Genome Res.">
        <title>Genome sequence of Blochmannia pennsylvanicus indicates parallel evolutionary trends among bacterial mutualists of insects.</title>
        <authorList>
            <person name="Degnan P.H."/>
            <person name="Lazarus A.B."/>
            <person name="Wernegreen J.J."/>
        </authorList>
    </citation>
    <scope>NUCLEOTIDE SEQUENCE [LARGE SCALE GENOMIC DNA]</scope>
    <source>
        <strain>BPEN</strain>
    </source>
</reference>
<evidence type="ECO:0000255" key="1">
    <source>
        <dbReference type="HAMAP-Rule" id="MF_00368"/>
    </source>
</evidence>
<evidence type="ECO:0000305" key="2"/>
<feature type="chain" id="PRO_0000243393" description="Large ribosomal subunit protein bL12">
    <location>
        <begin position="1"/>
        <end position="122"/>
    </location>
</feature>
<dbReference type="EMBL" id="CP000016">
    <property type="protein sequence ID" value="AAZ41184.1"/>
    <property type="molecule type" value="Genomic_DNA"/>
</dbReference>
<dbReference type="RefSeq" id="WP_011283095.1">
    <property type="nucleotide sequence ID" value="NC_007292.1"/>
</dbReference>
<dbReference type="SMR" id="Q492B8"/>
<dbReference type="STRING" id="291272.BPEN_578"/>
<dbReference type="KEGG" id="bpn:BPEN_578"/>
<dbReference type="eggNOG" id="COG0222">
    <property type="taxonomic scope" value="Bacteria"/>
</dbReference>
<dbReference type="HOGENOM" id="CLU_086499_3_2_6"/>
<dbReference type="OrthoDB" id="9811748at2"/>
<dbReference type="Proteomes" id="UP000007794">
    <property type="component" value="Chromosome"/>
</dbReference>
<dbReference type="GO" id="GO:0022625">
    <property type="term" value="C:cytosolic large ribosomal subunit"/>
    <property type="evidence" value="ECO:0007669"/>
    <property type="project" value="TreeGrafter"/>
</dbReference>
<dbReference type="GO" id="GO:0003729">
    <property type="term" value="F:mRNA binding"/>
    <property type="evidence" value="ECO:0007669"/>
    <property type="project" value="TreeGrafter"/>
</dbReference>
<dbReference type="GO" id="GO:0003735">
    <property type="term" value="F:structural constituent of ribosome"/>
    <property type="evidence" value="ECO:0007669"/>
    <property type="project" value="InterPro"/>
</dbReference>
<dbReference type="GO" id="GO:0006412">
    <property type="term" value="P:translation"/>
    <property type="evidence" value="ECO:0007669"/>
    <property type="project" value="UniProtKB-UniRule"/>
</dbReference>
<dbReference type="CDD" id="cd00387">
    <property type="entry name" value="Ribosomal_L7_L12"/>
    <property type="match status" value="1"/>
</dbReference>
<dbReference type="FunFam" id="3.30.1390.10:FF:000001">
    <property type="entry name" value="50S ribosomal protein L7/L12"/>
    <property type="match status" value="1"/>
</dbReference>
<dbReference type="Gene3D" id="3.30.1390.10">
    <property type="match status" value="1"/>
</dbReference>
<dbReference type="Gene3D" id="1.20.5.710">
    <property type="entry name" value="Single helix bin"/>
    <property type="match status" value="1"/>
</dbReference>
<dbReference type="HAMAP" id="MF_00368">
    <property type="entry name" value="Ribosomal_bL12"/>
    <property type="match status" value="1"/>
</dbReference>
<dbReference type="InterPro" id="IPR000206">
    <property type="entry name" value="Ribosomal_bL12"/>
</dbReference>
<dbReference type="InterPro" id="IPR013823">
    <property type="entry name" value="Ribosomal_bL12_C"/>
</dbReference>
<dbReference type="InterPro" id="IPR014719">
    <property type="entry name" value="Ribosomal_bL12_C/ClpS-like"/>
</dbReference>
<dbReference type="InterPro" id="IPR008932">
    <property type="entry name" value="Ribosomal_bL12_oligo"/>
</dbReference>
<dbReference type="InterPro" id="IPR036235">
    <property type="entry name" value="Ribosomal_bL12_oligo_N_sf"/>
</dbReference>
<dbReference type="NCBIfam" id="TIGR00855">
    <property type="entry name" value="L12"/>
    <property type="match status" value="1"/>
</dbReference>
<dbReference type="PANTHER" id="PTHR45987">
    <property type="entry name" value="39S RIBOSOMAL PROTEIN L12"/>
    <property type="match status" value="1"/>
</dbReference>
<dbReference type="PANTHER" id="PTHR45987:SF4">
    <property type="entry name" value="LARGE RIBOSOMAL SUBUNIT PROTEIN BL12M"/>
    <property type="match status" value="1"/>
</dbReference>
<dbReference type="Pfam" id="PF00542">
    <property type="entry name" value="Ribosomal_L12"/>
    <property type="match status" value="1"/>
</dbReference>
<dbReference type="Pfam" id="PF16320">
    <property type="entry name" value="Ribosomal_L12_N"/>
    <property type="match status" value="1"/>
</dbReference>
<dbReference type="SUPFAM" id="SSF54736">
    <property type="entry name" value="ClpS-like"/>
    <property type="match status" value="1"/>
</dbReference>
<dbReference type="SUPFAM" id="SSF48300">
    <property type="entry name" value="Ribosomal protein L7/12, oligomerisation (N-terminal) domain"/>
    <property type="match status" value="1"/>
</dbReference>
<proteinExistence type="inferred from homology"/>
<comment type="function">
    <text evidence="1">Forms part of the ribosomal stalk which helps the ribosome interact with GTP-bound translation factors. Is thus essential for accurate translation.</text>
</comment>
<comment type="subunit">
    <text evidence="1">Homodimer. Part of the ribosomal stalk of the 50S ribosomal subunit. Forms a multimeric L10(L12)X complex, where L10 forms an elongated spine to which 2 to 4 L12 dimers bind in a sequential fashion. Binds GTP-bound translation factors.</text>
</comment>
<comment type="similarity">
    <text evidence="1">Belongs to the bacterial ribosomal protein bL12 family.</text>
</comment>
<sequence length="122" mass="13273">MSLTKEQILDAISNMSVMDIVRLTSMMEEKFGVSTASLTTVEPDTSEAIVEEQTEFNVFLTAIGNNKIPVIKTVRSITGLGLKEAKELVESAPVILKESINKDDAETLKKTLETVGASVEIK</sequence>
<keyword id="KW-1185">Reference proteome</keyword>
<keyword id="KW-0687">Ribonucleoprotein</keyword>
<keyword id="KW-0689">Ribosomal protein</keyword>
<protein>
    <recommendedName>
        <fullName evidence="1">Large ribosomal subunit protein bL12</fullName>
    </recommendedName>
    <alternativeName>
        <fullName evidence="2">50S ribosomal protein L7/L12</fullName>
    </alternativeName>
</protein>